<sequence>MSTIEERVKKIVAEQLGVKEEEVTVEKSFVDDLGADSLDTVELVMALEEEFETEIPDEEAEKITTVQAAIDYVKAHQA</sequence>
<feature type="chain" id="PRO_0000180169" description="Acyl carrier protein">
    <location>
        <begin position="1"/>
        <end position="78"/>
    </location>
</feature>
<feature type="domain" description="Carrier" evidence="2">
    <location>
        <begin position="2"/>
        <end position="77"/>
    </location>
</feature>
<feature type="modified residue" description="O-(pantetheine 4'-phosphoryl)serine" evidence="2">
    <location>
        <position position="37"/>
    </location>
</feature>
<feature type="helix" evidence="3">
    <location>
        <begin position="4"/>
        <end position="16"/>
    </location>
</feature>
<feature type="helix" evidence="3">
    <location>
        <begin position="20"/>
        <end position="22"/>
    </location>
</feature>
<feature type="turn" evidence="3">
    <location>
        <begin position="29"/>
        <end position="33"/>
    </location>
</feature>
<feature type="helix" evidence="3">
    <location>
        <begin position="39"/>
        <end position="51"/>
    </location>
</feature>
<feature type="helix" evidence="3">
    <location>
        <begin position="57"/>
        <end position="60"/>
    </location>
</feature>
<feature type="helix" evidence="3">
    <location>
        <begin position="66"/>
        <end position="75"/>
    </location>
</feature>
<proteinExistence type="evidence at protein level"/>
<gene>
    <name evidence="1" type="primary">acpP</name>
    <name type="ordered locus">PP_1915</name>
</gene>
<dbReference type="EMBL" id="AE015451">
    <property type="protein sequence ID" value="AAN67533.1"/>
    <property type="molecule type" value="Genomic_DNA"/>
</dbReference>
<dbReference type="RefSeq" id="NP_744069.1">
    <property type="nucleotide sequence ID" value="NC_002947.4"/>
</dbReference>
<dbReference type="RefSeq" id="WP_010952937.1">
    <property type="nucleotide sequence ID" value="NZ_CP169744.1"/>
</dbReference>
<dbReference type="PDB" id="7PDI">
    <property type="method" value="X-ray"/>
    <property type="resolution" value="1.69 A"/>
    <property type="chains" value="A=2-78"/>
</dbReference>
<dbReference type="PDBsum" id="7PDI"/>
<dbReference type="SMR" id="Q88LL5"/>
<dbReference type="STRING" id="160488.PP_1915"/>
<dbReference type="PaxDb" id="160488-PP_1915"/>
<dbReference type="GeneID" id="83681540"/>
<dbReference type="KEGG" id="ppu:PP_1915"/>
<dbReference type="PATRIC" id="fig|160488.4.peg.2024"/>
<dbReference type="eggNOG" id="COG0236">
    <property type="taxonomic scope" value="Bacteria"/>
</dbReference>
<dbReference type="HOGENOM" id="CLU_108696_5_1_6"/>
<dbReference type="OrthoDB" id="9804551at2"/>
<dbReference type="PhylomeDB" id="Q88LL5"/>
<dbReference type="BioCyc" id="PPUT160488:G1G01-2027-MONOMER"/>
<dbReference type="UniPathway" id="UPA00094"/>
<dbReference type="Proteomes" id="UP000000556">
    <property type="component" value="Chromosome"/>
</dbReference>
<dbReference type="GO" id="GO:0005829">
    <property type="term" value="C:cytosol"/>
    <property type="evidence" value="ECO:0007669"/>
    <property type="project" value="TreeGrafter"/>
</dbReference>
<dbReference type="GO" id="GO:0016020">
    <property type="term" value="C:membrane"/>
    <property type="evidence" value="ECO:0007669"/>
    <property type="project" value="GOC"/>
</dbReference>
<dbReference type="GO" id="GO:0000035">
    <property type="term" value="F:acyl binding"/>
    <property type="evidence" value="ECO:0007669"/>
    <property type="project" value="TreeGrafter"/>
</dbReference>
<dbReference type="GO" id="GO:0000036">
    <property type="term" value="F:acyl carrier activity"/>
    <property type="evidence" value="ECO:0007669"/>
    <property type="project" value="UniProtKB-UniRule"/>
</dbReference>
<dbReference type="GO" id="GO:0009245">
    <property type="term" value="P:lipid A biosynthetic process"/>
    <property type="evidence" value="ECO:0007669"/>
    <property type="project" value="TreeGrafter"/>
</dbReference>
<dbReference type="FunFam" id="1.10.1200.10:FF:000001">
    <property type="entry name" value="Acyl carrier protein"/>
    <property type="match status" value="1"/>
</dbReference>
<dbReference type="Gene3D" id="1.10.1200.10">
    <property type="entry name" value="ACP-like"/>
    <property type="match status" value="1"/>
</dbReference>
<dbReference type="HAMAP" id="MF_01217">
    <property type="entry name" value="Acyl_carrier"/>
    <property type="match status" value="1"/>
</dbReference>
<dbReference type="InterPro" id="IPR003231">
    <property type="entry name" value="ACP"/>
</dbReference>
<dbReference type="InterPro" id="IPR036736">
    <property type="entry name" value="ACP-like_sf"/>
</dbReference>
<dbReference type="InterPro" id="IPR009081">
    <property type="entry name" value="PP-bd_ACP"/>
</dbReference>
<dbReference type="InterPro" id="IPR006162">
    <property type="entry name" value="Ppantetheine_attach_site"/>
</dbReference>
<dbReference type="NCBIfam" id="TIGR00517">
    <property type="entry name" value="acyl_carrier"/>
    <property type="match status" value="1"/>
</dbReference>
<dbReference type="NCBIfam" id="NF002148">
    <property type="entry name" value="PRK00982.1-2"/>
    <property type="match status" value="1"/>
</dbReference>
<dbReference type="NCBIfam" id="NF002149">
    <property type="entry name" value="PRK00982.1-3"/>
    <property type="match status" value="1"/>
</dbReference>
<dbReference type="NCBIfam" id="NF002150">
    <property type="entry name" value="PRK00982.1-4"/>
    <property type="match status" value="1"/>
</dbReference>
<dbReference type="NCBIfam" id="NF002151">
    <property type="entry name" value="PRK00982.1-5"/>
    <property type="match status" value="1"/>
</dbReference>
<dbReference type="PANTHER" id="PTHR20863">
    <property type="entry name" value="ACYL CARRIER PROTEIN"/>
    <property type="match status" value="1"/>
</dbReference>
<dbReference type="PANTHER" id="PTHR20863:SF76">
    <property type="entry name" value="CARRIER DOMAIN-CONTAINING PROTEIN"/>
    <property type="match status" value="1"/>
</dbReference>
<dbReference type="Pfam" id="PF00550">
    <property type="entry name" value="PP-binding"/>
    <property type="match status" value="1"/>
</dbReference>
<dbReference type="SUPFAM" id="SSF47336">
    <property type="entry name" value="ACP-like"/>
    <property type="match status" value="1"/>
</dbReference>
<dbReference type="PROSITE" id="PS50075">
    <property type="entry name" value="CARRIER"/>
    <property type="match status" value="1"/>
</dbReference>
<dbReference type="PROSITE" id="PS00012">
    <property type="entry name" value="PHOSPHOPANTETHEINE"/>
    <property type="match status" value="1"/>
</dbReference>
<reference key="1">
    <citation type="journal article" date="2002" name="Environ. Microbiol.">
        <title>Complete genome sequence and comparative analysis of the metabolically versatile Pseudomonas putida KT2440.</title>
        <authorList>
            <person name="Nelson K.E."/>
            <person name="Weinel C."/>
            <person name="Paulsen I.T."/>
            <person name="Dodson R.J."/>
            <person name="Hilbert H."/>
            <person name="Martins dos Santos V.A.P."/>
            <person name="Fouts D.E."/>
            <person name="Gill S.R."/>
            <person name="Pop M."/>
            <person name="Holmes M."/>
            <person name="Brinkac L.M."/>
            <person name="Beanan M.J."/>
            <person name="DeBoy R.T."/>
            <person name="Daugherty S.C."/>
            <person name="Kolonay J.F."/>
            <person name="Madupu R."/>
            <person name="Nelson W.C."/>
            <person name="White O."/>
            <person name="Peterson J.D."/>
            <person name="Khouri H.M."/>
            <person name="Hance I."/>
            <person name="Chris Lee P."/>
            <person name="Holtzapple E.K."/>
            <person name="Scanlan D."/>
            <person name="Tran K."/>
            <person name="Moazzez A."/>
            <person name="Utterback T.R."/>
            <person name="Rizzo M."/>
            <person name="Lee K."/>
            <person name="Kosack D."/>
            <person name="Moestl D."/>
            <person name="Wedler H."/>
            <person name="Lauber J."/>
            <person name="Stjepandic D."/>
            <person name="Hoheisel J."/>
            <person name="Straetz M."/>
            <person name="Heim S."/>
            <person name="Kiewitz C."/>
            <person name="Eisen J.A."/>
            <person name="Timmis K.N."/>
            <person name="Duesterhoeft A."/>
            <person name="Tuemmler B."/>
            <person name="Fraser C.M."/>
        </authorList>
    </citation>
    <scope>NUCLEOTIDE SEQUENCE [LARGE SCALE GENOMIC DNA]</scope>
    <source>
        <strain>ATCC 47054 / DSM 6125 / CFBP 8728 / NCIMB 11950 / KT2440</strain>
    </source>
</reference>
<name>ACP_PSEPK</name>
<comment type="function">
    <text evidence="1">Carrier of the growing fatty acid chain in fatty acid biosynthesis.</text>
</comment>
<comment type="pathway">
    <text evidence="1">Lipid metabolism; fatty acid biosynthesis.</text>
</comment>
<comment type="subcellular location">
    <subcellularLocation>
        <location evidence="1">Cytoplasm</location>
    </subcellularLocation>
</comment>
<comment type="PTM">
    <text evidence="1">4'-phosphopantetheine is transferred from CoA to a specific serine of apo-ACP by AcpS. This modification is essential for activity because fatty acids are bound in thioester linkage to the sulfhydryl of the prosthetic group.</text>
</comment>
<comment type="similarity">
    <text evidence="1">Belongs to the acyl carrier protein (ACP) family.</text>
</comment>
<accession>Q88LL5</accession>
<organism>
    <name type="scientific">Pseudomonas putida (strain ATCC 47054 / DSM 6125 / CFBP 8728 / NCIMB 11950 / KT2440)</name>
    <dbReference type="NCBI Taxonomy" id="160488"/>
    <lineage>
        <taxon>Bacteria</taxon>
        <taxon>Pseudomonadati</taxon>
        <taxon>Pseudomonadota</taxon>
        <taxon>Gammaproteobacteria</taxon>
        <taxon>Pseudomonadales</taxon>
        <taxon>Pseudomonadaceae</taxon>
        <taxon>Pseudomonas</taxon>
    </lineage>
</organism>
<keyword id="KW-0002">3D-structure</keyword>
<keyword id="KW-0963">Cytoplasm</keyword>
<keyword id="KW-0275">Fatty acid biosynthesis</keyword>
<keyword id="KW-0276">Fatty acid metabolism</keyword>
<keyword id="KW-0444">Lipid biosynthesis</keyword>
<keyword id="KW-0443">Lipid metabolism</keyword>
<keyword id="KW-0596">Phosphopantetheine</keyword>
<keyword id="KW-0597">Phosphoprotein</keyword>
<keyword id="KW-1185">Reference proteome</keyword>
<evidence type="ECO:0000255" key="1">
    <source>
        <dbReference type="HAMAP-Rule" id="MF_01217"/>
    </source>
</evidence>
<evidence type="ECO:0000255" key="2">
    <source>
        <dbReference type="PROSITE-ProRule" id="PRU00258"/>
    </source>
</evidence>
<evidence type="ECO:0007829" key="3">
    <source>
        <dbReference type="PDB" id="7PDI"/>
    </source>
</evidence>
<protein>
    <recommendedName>
        <fullName evidence="1">Acyl carrier protein</fullName>
        <shortName evidence="1">ACP</shortName>
    </recommendedName>
</protein>